<organism>
    <name type="scientific">Bos taurus</name>
    <name type="common">Bovine</name>
    <dbReference type="NCBI Taxonomy" id="9913"/>
    <lineage>
        <taxon>Eukaryota</taxon>
        <taxon>Metazoa</taxon>
        <taxon>Chordata</taxon>
        <taxon>Craniata</taxon>
        <taxon>Vertebrata</taxon>
        <taxon>Euteleostomi</taxon>
        <taxon>Mammalia</taxon>
        <taxon>Eutheria</taxon>
        <taxon>Laurasiatheria</taxon>
        <taxon>Artiodactyla</taxon>
        <taxon>Ruminantia</taxon>
        <taxon>Pecora</taxon>
        <taxon>Bovidae</taxon>
        <taxon>Bovinae</taxon>
        <taxon>Bos</taxon>
    </lineage>
</organism>
<protein>
    <recommendedName>
        <fullName>Neuromodulin</fullName>
    </recommendedName>
    <alternativeName>
        <fullName>Axonal membrane protein GAP-43</fullName>
    </alternativeName>
    <alternativeName>
        <fullName>Calmodulin-binding protein P-57</fullName>
    </alternativeName>
    <alternativeName>
        <fullName>Growth-associated protein 43</fullName>
    </alternativeName>
</protein>
<keyword id="KW-0112">Calmodulin-binding</keyword>
<keyword id="KW-1003">Cell membrane</keyword>
<keyword id="KW-0966">Cell projection</keyword>
<keyword id="KW-0963">Cytoplasm</keyword>
<keyword id="KW-0217">Developmental protein</keyword>
<keyword id="KW-0221">Differentiation</keyword>
<keyword id="KW-0903">Direct protein sequencing</keyword>
<keyword id="KW-0341">Growth regulation</keyword>
<keyword id="KW-0449">Lipoprotein</keyword>
<keyword id="KW-0472">Membrane</keyword>
<keyword id="KW-0524">Neurogenesis</keyword>
<keyword id="KW-0564">Palmitate</keyword>
<keyword id="KW-0597">Phosphoprotein</keyword>
<keyword id="KW-1185">Reference proteome</keyword>
<keyword id="KW-0770">Synapse</keyword>
<feature type="chain" id="PRO_0000159595" description="Neuromodulin">
    <location>
        <begin position="1"/>
        <end position="242"/>
    </location>
</feature>
<feature type="domain" description="IQ" evidence="4">
    <location>
        <begin position="31"/>
        <end position="60"/>
    </location>
</feature>
<feature type="region of interest" description="Disordered" evidence="5">
    <location>
        <begin position="1"/>
        <end position="242"/>
    </location>
</feature>
<feature type="compositionally biased region" description="Basic and acidic residues" evidence="5">
    <location>
        <begin position="9"/>
        <end position="32"/>
    </location>
</feature>
<feature type="compositionally biased region" description="Basic and acidic residues" evidence="5">
    <location>
        <begin position="66"/>
        <end position="84"/>
    </location>
</feature>
<feature type="compositionally biased region" description="Low complexity" evidence="5">
    <location>
        <begin position="85"/>
        <end position="97"/>
    </location>
</feature>
<feature type="compositionally biased region" description="Basic and acidic residues" evidence="5">
    <location>
        <begin position="98"/>
        <end position="118"/>
    </location>
</feature>
<feature type="compositionally biased region" description="Low complexity" evidence="5">
    <location>
        <begin position="119"/>
        <end position="134"/>
    </location>
</feature>
<feature type="compositionally biased region" description="Polar residues" evidence="5">
    <location>
        <begin position="143"/>
        <end position="158"/>
    </location>
</feature>
<feature type="compositionally biased region" description="Basic and acidic residues" evidence="5">
    <location>
        <begin position="159"/>
        <end position="171"/>
    </location>
</feature>
<feature type="compositionally biased region" description="Low complexity" evidence="5">
    <location>
        <begin position="172"/>
        <end position="204"/>
    </location>
</feature>
<feature type="compositionally biased region" description="Basic and acidic residues" evidence="5">
    <location>
        <begin position="209"/>
        <end position="242"/>
    </location>
</feature>
<feature type="modified residue" description="Phosphoserine; by PHK and PKC" evidence="8 10">
    <location>
        <position position="41"/>
    </location>
</feature>
<feature type="modified residue" description="Phosphoserine" evidence="1">
    <location>
        <position position="86"/>
    </location>
</feature>
<feature type="modified residue" description="Phosphoserine" evidence="1">
    <location>
        <position position="155"/>
    </location>
</feature>
<feature type="modified residue" description="Phosphoserine" evidence="1">
    <location>
        <position position="157"/>
    </location>
</feature>
<feature type="modified residue" description="Phosphoserine" evidence="1">
    <location>
        <position position="158"/>
    </location>
</feature>
<feature type="modified residue" description="Phosphoserine; by CK2" evidence="7">
    <location>
        <position position="206"/>
    </location>
</feature>
<feature type="modified residue" description="Phosphoserine; by CK2" evidence="7">
    <location>
        <position position="207"/>
    </location>
</feature>
<feature type="lipid moiety-binding region" description="S-palmitoyl cysteine" evidence="9">
    <location>
        <position position="3"/>
    </location>
</feature>
<feature type="lipid moiety-binding region" description="S-palmitoyl cysteine" evidence="9">
    <location>
        <position position="4"/>
    </location>
</feature>
<feature type="mutagenesis site" description="Lack of palmitoylation; when associated with G-4." evidence="9">
    <original>C</original>
    <variation>G</variation>
    <location>
        <position position="3"/>
    </location>
</feature>
<feature type="mutagenesis site" description="Decreased palmitoylation level." evidence="9">
    <original>C</original>
    <variation>L</variation>
    <location>
        <position position="3"/>
    </location>
</feature>
<feature type="mutagenesis site" description="Lack of palmitoylation; when associated with G-3." evidence="9">
    <original>C</original>
    <variation>G</variation>
    <location>
        <position position="4"/>
    </location>
</feature>
<feature type="mutagenesis site" description="Decreased palmitoylation level." evidence="9">
    <original>C</original>
    <variation>L</variation>
    <location>
        <position position="4"/>
    </location>
</feature>
<feature type="sequence conflict" description="In Ref. 3; AAI18453." evidence="11" ref="3">
    <original>Q</original>
    <variation>R</variation>
    <location>
        <position position="22"/>
    </location>
</feature>
<feature type="sequence conflict" description="In Ref. 1; AA sequence." evidence="11" ref="1">
    <location>
        <begin position="111"/>
        <end position="113"/>
    </location>
</feature>
<feature type="sequence conflict" description="In Ref. 2; AAO60065." evidence="11" ref="2">
    <original>P</original>
    <variation>L</variation>
    <location>
        <position position="134"/>
    </location>
</feature>
<accession>P06836</accession>
<accession>Q17QB5</accession>
<accession>Q6XZP9</accession>
<proteinExistence type="evidence at protein level"/>
<name>NEUM_BOVIN</name>
<gene>
    <name type="primary">GAP43</name>
</gene>
<comment type="function">
    <text evidence="3">This protein is associated with nerve growth. It is a major component of the motile 'growth cones' that form the tips of elongating axons. Plays a role in axonal and dendritic filopodia induction (By similarity).</text>
</comment>
<comment type="subunit">
    <text evidence="1 6">Identified in a complex containing FGFR4, NCAM1, CDH2, PLCG1, FRS2, SRC, SHC1, GAP43 and CTTN (By similarity). Interacts (via IQ domain) with calmodulin (PubMed:1824693). Binds calmodulin with a greater affinity in the absence of Ca(2+) than in its presence (PubMed:1824693).</text>
</comment>
<comment type="subcellular location">
    <subcellularLocation>
        <location evidence="3">Cell membrane</location>
        <topology evidence="3">Peripheral membrane protein</topology>
        <orientation evidence="3">Cytoplasmic side</orientation>
    </subcellularLocation>
    <subcellularLocation>
        <location evidence="3">Cell projection</location>
        <location evidence="3">Growth cone membrane</location>
        <topology evidence="3">Peripheral membrane protein</topology>
        <orientation evidence="3">Cytoplasmic side</orientation>
    </subcellularLocation>
    <subcellularLocation>
        <location evidence="3">Synapse</location>
    </subcellularLocation>
    <subcellularLocation>
        <location evidence="3">Cell projection</location>
        <location evidence="3">Filopodium membrane</location>
        <topology evidence="3">Peripheral membrane protein</topology>
    </subcellularLocation>
    <subcellularLocation>
        <location evidence="2">Perikaryon</location>
    </subcellularLocation>
    <subcellularLocation>
        <location evidence="2">Cell projection</location>
        <location evidence="2">Dendrite</location>
    </subcellularLocation>
    <subcellularLocation>
        <location evidence="2">Cell projection</location>
        <location evidence="2">Axon</location>
    </subcellularLocation>
    <subcellularLocation>
        <location evidence="2">Cytoplasm</location>
    </subcellularLocation>
    <text evidence="3">Cytoplasmic surface of growth cone and synaptic plasma membranes.</text>
</comment>
<comment type="PTM">
    <text evidence="7 8 10">Phosphorylated (PubMed:1828073, PubMed:2140056, PubMed:8454596). Phosphorylation of this protein by a protein kinase C is specifically correlated with certain forms of synaptic plasticity (PubMed:2140056).</text>
</comment>
<comment type="PTM">
    <text evidence="1 3">Palmitoylated by ZDHHC3 (By similarity). Palmitoylation is regulated by ARF6 and is essential for plasma membrane association and axonal and dendritic filopodia induction. Deacylated by LYPLA2 (By similarity).</text>
</comment>
<comment type="similarity">
    <text evidence="11">Belongs to the neuromodulin family.</text>
</comment>
<reference key="1">
    <citation type="journal article" date="1987" name="Biochemistry">
        <title>Amino acid sequence of P-57, a neurospecific calmodulin-binding protein.</title>
        <authorList>
            <person name="Wakim B.T."/>
            <person name="Alexander K.A."/>
            <person name="Masure H.R."/>
            <person name="Cimler B.M."/>
            <person name="Storm D.R."/>
            <person name="Walsh K.A."/>
        </authorList>
    </citation>
    <scope>PROTEIN SEQUENCE</scope>
</reference>
<reference key="2">
    <citation type="submission" date="2002-12" db="EMBL/GenBank/DDBJ databases">
        <title>Bovine GAP43 cDNA.</title>
        <authorList>
            <person name="Haegeman A."/>
        </authorList>
    </citation>
    <scope>NUCLEOTIDE SEQUENCE [MRNA]</scope>
</reference>
<reference key="3">
    <citation type="submission" date="2006-06" db="EMBL/GenBank/DDBJ databases">
        <authorList>
            <consortium name="NIH - Mammalian Gene Collection (MGC) project"/>
        </authorList>
    </citation>
    <scope>NUCLEOTIDE SEQUENCE [LARGE SCALE MRNA]</scope>
    <source>
        <strain>Hereford</strain>
        <tissue>Fetal cerebellum</tissue>
    </source>
</reference>
<reference key="4">
    <citation type="journal article" date="1990" name="Biochemistry">
        <title>Identification of the protein kinase C phosphorylation site in neuromodulin.</title>
        <authorList>
            <person name="Apel E.D."/>
            <person name="Byford M.F."/>
            <person name="Au D."/>
            <person name="Walsh K.A."/>
            <person name="Storm D.R."/>
        </authorList>
    </citation>
    <scope>PHOSPHORYLATION AT SER-41 BY PKC</scope>
</reference>
<reference key="5">
    <citation type="journal article" date="1991" name="J. Biol. Chem.">
        <title>Phosphorylation of neuromodulin (GAP-43) by casein kinase II. Identification of phosphorylation sites and regulation by calmodulin.</title>
        <authorList>
            <person name="Apel E.D."/>
            <person name="Litchfield D.W."/>
            <person name="Cllark R.H."/>
            <person name="Krebs E.G."/>
            <person name="Storm D.R."/>
        </authorList>
    </citation>
    <scope>PHOSPHORYLATION AT SER-206 AND SER-207 BY CKII</scope>
</reference>
<reference key="6">
    <citation type="journal article" date="1991" name="J. Biol. Chem.">
        <title>Characterization of the calmodulin binding domain of neuromodulin. Functional significance of serine 41 and phenylalanine 42.</title>
        <authorList>
            <person name="Chapman E.R."/>
            <person name="Au D."/>
            <person name="Alexander K.A."/>
            <person name="Nicolson T.A."/>
            <person name="Storm D.R."/>
        </authorList>
    </citation>
    <scope>INTERACTION WITH CALMODULIN</scope>
</reference>
<reference key="7">
    <citation type="journal article" date="1993" name="Biochemistry">
        <title>Analysis of the palmitoylation and membrane targeting domain of neuromodulin (GAP-43) by site-specific mutagenesis.</title>
        <authorList>
            <person name="Liu Y."/>
            <person name="Fisher D.A."/>
            <person name="Storm D.R."/>
        </authorList>
    </citation>
    <scope>PALMITOYLATION AT CYS-3 AND CYS-4</scope>
    <scope>MUTAGENESIS OF CYS-3 AND CYS-4</scope>
</reference>
<reference key="8">
    <citation type="journal article" date="1993" name="J. Biol. Chem.">
        <title>Phosphorylase kinase phosphorylates the calmodulin-binding regulatory regions of neuronal tissue-specific proteins B-50 (GAP-43) and neurogranin.</title>
        <authorList>
            <person name="Paudel H.K."/>
            <person name="Zwiers H."/>
            <person name="Wang J.H."/>
        </authorList>
    </citation>
    <scope>PHOSPHORYLATION AT SER-41 BY PHK</scope>
</reference>
<evidence type="ECO:0000250" key="1">
    <source>
        <dbReference type="UniProtKB" id="P06837"/>
    </source>
</evidence>
<evidence type="ECO:0000250" key="2">
    <source>
        <dbReference type="UniProtKB" id="P07936"/>
    </source>
</evidence>
<evidence type="ECO:0000250" key="3">
    <source>
        <dbReference type="UniProtKB" id="P17677"/>
    </source>
</evidence>
<evidence type="ECO:0000255" key="4">
    <source>
        <dbReference type="PROSITE-ProRule" id="PRU00116"/>
    </source>
</evidence>
<evidence type="ECO:0000256" key="5">
    <source>
        <dbReference type="SAM" id="MobiDB-lite"/>
    </source>
</evidence>
<evidence type="ECO:0000269" key="6">
    <source>
    </source>
</evidence>
<evidence type="ECO:0000269" key="7">
    <source>
    </source>
</evidence>
<evidence type="ECO:0000269" key="8">
    <source>
    </source>
</evidence>
<evidence type="ECO:0000269" key="9">
    <source>
    </source>
</evidence>
<evidence type="ECO:0000269" key="10">
    <source>
    </source>
</evidence>
<evidence type="ECO:0000305" key="11"/>
<sequence length="242" mass="25066">MLCCMRRTKQVEKNDEDQKIEQDGIKPEDKAHKAATKIQASFRGHITRKKLKGEKKGDAPAAEAEANEKDEAAVAEGTEKKEGEGSTPAEAAPGAGPKPEEKTGKAGETPSEEKKGEGAPDAATEQAAPQAPAPSEEKAGSAETESATKASTDNSPSSKAEDAPAKEEPKQADVPAAVTAAAATAPAAEDAAAMATAQPPTETAESSQAEEKIEAVDETKPKDSARQDEGKGEEREADQEHA</sequence>
<dbReference type="EMBL" id="AY195838">
    <property type="protein sequence ID" value="AAO60065.1"/>
    <property type="molecule type" value="mRNA"/>
</dbReference>
<dbReference type="EMBL" id="BC118452">
    <property type="protein sequence ID" value="AAI18453.1"/>
    <property type="molecule type" value="mRNA"/>
</dbReference>
<dbReference type="PIR" id="A27225">
    <property type="entry name" value="A27225"/>
</dbReference>
<dbReference type="RefSeq" id="NP_976234.2">
    <property type="nucleotide sequence ID" value="NM_203358.2"/>
</dbReference>
<dbReference type="SMR" id="P06836"/>
<dbReference type="FunCoup" id="P06836">
    <property type="interactions" value="357"/>
</dbReference>
<dbReference type="STRING" id="9913.ENSBTAP00000008460"/>
<dbReference type="iPTMnet" id="P06836"/>
<dbReference type="PaxDb" id="9913-ENSBTAP00000008460"/>
<dbReference type="PeptideAtlas" id="P06836"/>
<dbReference type="Ensembl" id="ENSBTAT00000097552.1">
    <property type="protein sequence ID" value="ENSBTAP00000080199.1"/>
    <property type="gene ID" value="ENSBTAG00000006451.7"/>
</dbReference>
<dbReference type="GeneID" id="281777"/>
<dbReference type="KEGG" id="bta:281777"/>
<dbReference type="CTD" id="2596"/>
<dbReference type="VEuPathDB" id="HostDB:ENSBTAG00000006451"/>
<dbReference type="VGNC" id="VGNC:29247">
    <property type="gene designation" value="GAP43"/>
</dbReference>
<dbReference type="eggNOG" id="ENOG502RXWF">
    <property type="taxonomic scope" value="Eukaryota"/>
</dbReference>
<dbReference type="GeneTree" id="ENSGT00730000111265"/>
<dbReference type="HOGENOM" id="CLU_102989_0_0_1"/>
<dbReference type="InParanoid" id="P06836"/>
<dbReference type="OrthoDB" id="9397439at2759"/>
<dbReference type="TreeFam" id="TF333213"/>
<dbReference type="Reactome" id="R-BTA-373760">
    <property type="pathway name" value="L1CAM interactions"/>
</dbReference>
<dbReference type="Proteomes" id="UP000009136">
    <property type="component" value="Chromosome 1"/>
</dbReference>
<dbReference type="Bgee" id="ENSBTAG00000006451">
    <property type="expression patterns" value="Expressed in floor plate of diencephalon and 54 other cell types or tissues"/>
</dbReference>
<dbReference type="GO" id="GO:0005737">
    <property type="term" value="C:cytoplasm"/>
    <property type="evidence" value="ECO:0000318"/>
    <property type="project" value="GO_Central"/>
</dbReference>
<dbReference type="GO" id="GO:0030425">
    <property type="term" value="C:dendrite"/>
    <property type="evidence" value="ECO:0007669"/>
    <property type="project" value="UniProtKB-SubCell"/>
</dbReference>
<dbReference type="GO" id="GO:0031527">
    <property type="term" value="C:filopodium membrane"/>
    <property type="evidence" value="ECO:0007669"/>
    <property type="project" value="UniProtKB-SubCell"/>
</dbReference>
<dbReference type="GO" id="GO:0032584">
    <property type="term" value="C:growth cone membrane"/>
    <property type="evidence" value="ECO:0007669"/>
    <property type="project" value="UniProtKB-SubCell"/>
</dbReference>
<dbReference type="GO" id="GO:0043204">
    <property type="term" value="C:perikaryon"/>
    <property type="evidence" value="ECO:0007669"/>
    <property type="project" value="UniProtKB-SubCell"/>
</dbReference>
<dbReference type="GO" id="GO:0005886">
    <property type="term" value="C:plasma membrane"/>
    <property type="evidence" value="ECO:0000318"/>
    <property type="project" value="GO_Central"/>
</dbReference>
<dbReference type="GO" id="GO:0014069">
    <property type="term" value="C:postsynaptic density"/>
    <property type="evidence" value="ECO:0000318"/>
    <property type="project" value="GO_Central"/>
</dbReference>
<dbReference type="GO" id="GO:0005516">
    <property type="term" value="F:calmodulin binding"/>
    <property type="evidence" value="ECO:0000318"/>
    <property type="project" value="GO_Central"/>
</dbReference>
<dbReference type="GO" id="GO:0008289">
    <property type="term" value="F:lipid binding"/>
    <property type="evidence" value="ECO:0000270"/>
    <property type="project" value="DisProt"/>
</dbReference>
<dbReference type="GO" id="GO:0035727">
    <property type="term" value="F:lysophosphatidic acid binding"/>
    <property type="evidence" value="ECO:0000318"/>
    <property type="project" value="GO_Central"/>
</dbReference>
<dbReference type="GO" id="GO:1901981">
    <property type="term" value="F:phosphatidylinositol phosphate binding"/>
    <property type="evidence" value="ECO:0000318"/>
    <property type="project" value="GO_Central"/>
</dbReference>
<dbReference type="GO" id="GO:0001786">
    <property type="term" value="F:phosphatidylserine binding"/>
    <property type="evidence" value="ECO:0000318"/>
    <property type="project" value="GO_Central"/>
</dbReference>
<dbReference type="GO" id="GO:0016198">
    <property type="term" value="P:axon choice point recognition"/>
    <property type="evidence" value="ECO:0000318"/>
    <property type="project" value="GO_Central"/>
</dbReference>
<dbReference type="GO" id="GO:0031103">
    <property type="term" value="P:axon regeneration"/>
    <property type="evidence" value="ECO:0000318"/>
    <property type="project" value="GO_Central"/>
</dbReference>
<dbReference type="GO" id="GO:0040008">
    <property type="term" value="P:regulation of growth"/>
    <property type="evidence" value="ECO:0007669"/>
    <property type="project" value="InterPro"/>
</dbReference>
<dbReference type="GO" id="GO:0042246">
    <property type="term" value="P:tissue regeneration"/>
    <property type="evidence" value="ECO:0000318"/>
    <property type="project" value="GO_Central"/>
</dbReference>
<dbReference type="CDD" id="cd23767">
    <property type="entry name" value="IQCD"/>
    <property type="match status" value="1"/>
</dbReference>
<dbReference type="DisProt" id="DP00955"/>
<dbReference type="FunFam" id="1.20.5.190:FF:000075">
    <property type="entry name" value="Neuromodulin"/>
    <property type="match status" value="1"/>
</dbReference>
<dbReference type="Gene3D" id="1.20.5.190">
    <property type="match status" value="1"/>
</dbReference>
<dbReference type="InterPro" id="IPR000048">
    <property type="entry name" value="IQ_motif_EF-hand-BS"/>
</dbReference>
<dbReference type="InterPro" id="IPR001422">
    <property type="entry name" value="Neuromodulin"/>
</dbReference>
<dbReference type="InterPro" id="IPR017454">
    <property type="entry name" value="Neuromodulin_C"/>
</dbReference>
<dbReference type="InterPro" id="IPR018947">
    <property type="entry name" value="Neuromodulin_gap-junction_N"/>
</dbReference>
<dbReference type="InterPro" id="IPR033137">
    <property type="entry name" value="Neuromodulin_P_site"/>
</dbReference>
<dbReference type="InterPro" id="IPR018243">
    <property type="entry name" value="Neuromodulin_palmitoyl_site"/>
</dbReference>
<dbReference type="PANTHER" id="PTHR10699">
    <property type="entry name" value="NEUROMODULIN"/>
    <property type="match status" value="1"/>
</dbReference>
<dbReference type="PANTHER" id="PTHR10699:SF15">
    <property type="entry name" value="NEUROMODULIN"/>
    <property type="match status" value="1"/>
</dbReference>
<dbReference type="Pfam" id="PF00612">
    <property type="entry name" value="IQ"/>
    <property type="match status" value="1"/>
</dbReference>
<dbReference type="Pfam" id="PF06614">
    <property type="entry name" value="Neuromodulin"/>
    <property type="match status" value="1"/>
</dbReference>
<dbReference type="Pfam" id="PF10580">
    <property type="entry name" value="Neuromodulin_N"/>
    <property type="match status" value="1"/>
</dbReference>
<dbReference type="PRINTS" id="PR00215">
    <property type="entry name" value="NEUROMODULIN"/>
</dbReference>
<dbReference type="SMART" id="SM00015">
    <property type="entry name" value="IQ"/>
    <property type="match status" value="1"/>
</dbReference>
<dbReference type="PROSITE" id="PS50096">
    <property type="entry name" value="IQ"/>
    <property type="match status" value="1"/>
</dbReference>
<dbReference type="PROSITE" id="PS00412">
    <property type="entry name" value="NEUROMODULIN_1"/>
    <property type="match status" value="1"/>
</dbReference>
<dbReference type="PROSITE" id="PS00413">
    <property type="entry name" value="NEUROMODULIN_2"/>
    <property type="match status" value="1"/>
</dbReference>